<protein>
    <recommendedName>
        <fullName evidence="1">Large ribosomal subunit protein bL12</fullName>
    </recommendedName>
    <alternativeName>
        <fullName evidence="2">50S ribosomal protein L7/L12</fullName>
    </alternativeName>
</protein>
<comment type="function">
    <text evidence="1">Forms part of the ribosomal stalk which helps the ribosome interact with GTP-bound translation factors. Is thus essential for accurate translation.</text>
</comment>
<comment type="subunit">
    <text evidence="1">Homodimer. Part of the ribosomal stalk of the 50S ribosomal subunit. Forms a multimeric L10(L12)X complex, where L10 forms an elongated spine to which 2 to 4 L12 dimers bind in a sequential fashion. Binds GTP-bound translation factors.</text>
</comment>
<comment type="similarity">
    <text evidence="1">Belongs to the bacterial ribosomal protein bL12 family.</text>
</comment>
<name>RL7_SYNSC</name>
<dbReference type="EMBL" id="CP000110">
    <property type="protein sequence ID" value="ABB36200.1"/>
    <property type="molecule type" value="Genomic_DNA"/>
</dbReference>
<dbReference type="RefSeq" id="WP_011365396.1">
    <property type="nucleotide sequence ID" value="NC_007516.1"/>
</dbReference>
<dbReference type="SMR" id="Q3AGT2"/>
<dbReference type="STRING" id="110662.Syncc9605_2468"/>
<dbReference type="KEGG" id="syd:Syncc9605_2468"/>
<dbReference type="eggNOG" id="COG0222">
    <property type="taxonomic scope" value="Bacteria"/>
</dbReference>
<dbReference type="HOGENOM" id="CLU_086499_3_0_3"/>
<dbReference type="OrthoDB" id="9811748at2"/>
<dbReference type="GO" id="GO:0022625">
    <property type="term" value="C:cytosolic large ribosomal subunit"/>
    <property type="evidence" value="ECO:0007669"/>
    <property type="project" value="TreeGrafter"/>
</dbReference>
<dbReference type="GO" id="GO:0003729">
    <property type="term" value="F:mRNA binding"/>
    <property type="evidence" value="ECO:0007669"/>
    <property type="project" value="TreeGrafter"/>
</dbReference>
<dbReference type="GO" id="GO:0003735">
    <property type="term" value="F:structural constituent of ribosome"/>
    <property type="evidence" value="ECO:0007669"/>
    <property type="project" value="InterPro"/>
</dbReference>
<dbReference type="GO" id="GO:0006412">
    <property type="term" value="P:translation"/>
    <property type="evidence" value="ECO:0007669"/>
    <property type="project" value="UniProtKB-UniRule"/>
</dbReference>
<dbReference type="CDD" id="cd00387">
    <property type="entry name" value="Ribosomal_L7_L12"/>
    <property type="match status" value="1"/>
</dbReference>
<dbReference type="FunFam" id="3.30.1390.10:FF:000001">
    <property type="entry name" value="50S ribosomal protein L7/L12"/>
    <property type="match status" value="1"/>
</dbReference>
<dbReference type="Gene3D" id="3.30.1390.10">
    <property type="match status" value="1"/>
</dbReference>
<dbReference type="Gene3D" id="1.20.5.710">
    <property type="entry name" value="Single helix bin"/>
    <property type="match status" value="1"/>
</dbReference>
<dbReference type="HAMAP" id="MF_00368">
    <property type="entry name" value="Ribosomal_bL12"/>
    <property type="match status" value="1"/>
</dbReference>
<dbReference type="InterPro" id="IPR000206">
    <property type="entry name" value="Ribosomal_bL12"/>
</dbReference>
<dbReference type="InterPro" id="IPR013823">
    <property type="entry name" value="Ribosomal_bL12_C"/>
</dbReference>
<dbReference type="InterPro" id="IPR014719">
    <property type="entry name" value="Ribosomal_bL12_C/ClpS-like"/>
</dbReference>
<dbReference type="InterPro" id="IPR008932">
    <property type="entry name" value="Ribosomal_bL12_oligo"/>
</dbReference>
<dbReference type="InterPro" id="IPR036235">
    <property type="entry name" value="Ribosomal_bL12_oligo_N_sf"/>
</dbReference>
<dbReference type="NCBIfam" id="TIGR00855">
    <property type="entry name" value="L12"/>
    <property type="match status" value="1"/>
</dbReference>
<dbReference type="PANTHER" id="PTHR45987">
    <property type="entry name" value="39S RIBOSOMAL PROTEIN L12"/>
    <property type="match status" value="1"/>
</dbReference>
<dbReference type="PANTHER" id="PTHR45987:SF4">
    <property type="entry name" value="LARGE RIBOSOMAL SUBUNIT PROTEIN BL12M"/>
    <property type="match status" value="1"/>
</dbReference>
<dbReference type="Pfam" id="PF00542">
    <property type="entry name" value="Ribosomal_L12"/>
    <property type="match status" value="1"/>
</dbReference>
<dbReference type="Pfam" id="PF16320">
    <property type="entry name" value="Ribosomal_L12_N"/>
    <property type="match status" value="1"/>
</dbReference>
<dbReference type="SUPFAM" id="SSF54736">
    <property type="entry name" value="ClpS-like"/>
    <property type="match status" value="1"/>
</dbReference>
<dbReference type="SUPFAM" id="SSF48300">
    <property type="entry name" value="Ribosomal protein L7/12, oligomerisation (N-terminal) domain"/>
    <property type="match status" value="1"/>
</dbReference>
<organism>
    <name type="scientific">Synechococcus sp. (strain CC9605)</name>
    <dbReference type="NCBI Taxonomy" id="110662"/>
    <lineage>
        <taxon>Bacteria</taxon>
        <taxon>Bacillati</taxon>
        <taxon>Cyanobacteriota</taxon>
        <taxon>Cyanophyceae</taxon>
        <taxon>Synechococcales</taxon>
        <taxon>Synechococcaceae</taxon>
        <taxon>Synechococcus</taxon>
    </lineage>
</organism>
<reference key="1">
    <citation type="submission" date="2005-07" db="EMBL/GenBank/DDBJ databases">
        <title>Complete sequence of Synechococcus sp. CC9605.</title>
        <authorList>
            <consortium name="US DOE Joint Genome Institute"/>
            <person name="Copeland A."/>
            <person name="Lucas S."/>
            <person name="Lapidus A."/>
            <person name="Barry K."/>
            <person name="Detter J.C."/>
            <person name="Glavina T."/>
            <person name="Hammon N."/>
            <person name="Israni S."/>
            <person name="Pitluck S."/>
            <person name="Schmutz J."/>
            <person name="Martinez M."/>
            <person name="Larimer F."/>
            <person name="Land M."/>
            <person name="Kyrpides N."/>
            <person name="Ivanova N."/>
            <person name="Richardson P."/>
        </authorList>
    </citation>
    <scope>NUCLEOTIDE SEQUENCE [LARGE SCALE GENOMIC DNA]</scope>
    <source>
        <strain>CC9605</strain>
    </source>
</reference>
<proteinExistence type="inferred from homology"/>
<keyword id="KW-0687">Ribonucleoprotein</keyword>
<keyword id="KW-0689">Ribosomal protein</keyword>
<feature type="chain" id="PRO_0000243509" description="Large ribosomal subunit protein bL12">
    <location>
        <begin position="1"/>
        <end position="129"/>
    </location>
</feature>
<sequence>MSAKTDEILESLKSLSLLEASELVKQIEEAFGVSAAASAGVVMAAPGAAGGGGEAAEEKTEFDVILEGFEASAKIKVLKAVREATGLGLGDAKALVEAAPKAFKEGVSKEDAEAAKKAIEEAGGKVTLK</sequence>
<accession>Q3AGT2</accession>
<evidence type="ECO:0000255" key="1">
    <source>
        <dbReference type="HAMAP-Rule" id="MF_00368"/>
    </source>
</evidence>
<evidence type="ECO:0000305" key="2"/>
<gene>
    <name evidence="1" type="primary">rplL</name>
    <name evidence="1" type="synonym">rpl12</name>
    <name type="ordered locus">Syncc9605_2468</name>
</gene>